<dbReference type="EMBL" id="AM263198">
    <property type="protein sequence ID" value="CAK20832.1"/>
    <property type="molecule type" value="Genomic_DNA"/>
</dbReference>
<dbReference type="RefSeq" id="WP_011702210.1">
    <property type="nucleotide sequence ID" value="NC_008555.1"/>
</dbReference>
<dbReference type="SMR" id="A0AIK0"/>
<dbReference type="STRING" id="386043.lwe1414"/>
<dbReference type="GeneID" id="61189290"/>
<dbReference type="KEGG" id="lwe:lwe1414"/>
<dbReference type="eggNOG" id="COG0468">
    <property type="taxonomic scope" value="Bacteria"/>
</dbReference>
<dbReference type="HOGENOM" id="CLU_040469_3_2_9"/>
<dbReference type="OrthoDB" id="9776733at2"/>
<dbReference type="Proteomes" id="UP000000779">
    <property type="component" value="Chromosome"/>
</dbReference>
<dbReference type="GO" id="GO:0005829">
    <property type="term" value="C:cytosol"/>
    <property type="evidence" value="ECO:0007669"/>
    <property type="project" value="TreeGrafter"/>
</dbReference>
<dbReference type="GO" id="GO:0005524">
    <property type="term" value="F:ATP binding"/>
    <property type="evidence" value="ECO:0007669"/>
    <property type="project" value="UniProtKB-UniRule"/>
</dbReference>
<dbReference type="GO" id="GO:0016887">
    <property type="term" value="F:ATP hydrolysis activity"/>
    <property type="evidence" value="ECO:0007669"/>
    <property type="project" value="InterPro"/>
</dbReference>
<dbReference type="GO" id="GO:0140664">
    <property type="term" value="F:ATP-dependent DNA damage sensor activity"/>
    <property type="evidence" value="ECO:0007669"/>
    <property type="project" value="InterPro"/>
</dbReference>
<dbReference type="GO" id="GO:0003684">
    <property type="term" value="F:damaged DNA binding"/>
    <property type="evidence" value="ECO:0007669"/>
    <property type="project" value="UniProtKB-UniRule"/>
</dbReference>
<dbReference type="GO" id="GO:0003697">
    <property type="term" value="F:single-stranded DNA binding"/>
    <property type="evidence" value="ECO:0007669"/>
    <property type="project" value="UniProtKB-UniRule"/>
</dbReference>
<dbReference type="GO" id="GO:0006310">
    <property type="term" value="P:DNA recombination"/>
    <property type="evidence" value="ECO:0007669"/>
    <property type="project" value="UniProtKB-UniRule"/>
</dbReference>
<dbReference type="GO" id="GO:0006281">
    <property type="term" value="P:DNA repair"/>
    <property type="evidence" value="ECO:0007669"/>
    <property type="project" value="UniProtKB-UniRule"/>
</dbReference>
<dbReference type="GO" id="GO:0009432">
    <property type="term" value="P:SOS response"/>
    <property type="evidence" value="ECO:0007669"/>
    <property type="project" value="UniProtKB-UniRule"/>
</dbReference>
<dbReference type="CDD" id="cd00983">
    <property type="entry name" value="RecA"/>
    <property type="match status" value="1"/>
</dbReference>
<dbReference type="FunFam" id="3.40.50.300:FF:000087">
    <property type="entry name" value="Recombinase RecA"/>
    <property type="match status" value="1"/>
</dbReference>
<dbReference type="Gene3D" id="3.40.50.300">
    <property type="entry name" value="P-loop containing nucleotide triphosphate hydrolases"/>
    <property type="match status" value="1"/>
</dbReference>
<dbReference type="HAMAP" id="MF_00268">
    <property type="entry name" value="RecA"/>
    <property type="match status" value="1"/>
</dbReference>
<dbReference type="InterPro" id="IPR003593">
    <property type="entry name" value="AAA+_ATPase"/>
</dbReference>
<dbReference type="InterPro" id="IPR013765">
    <property type="entry name" value="DNA_recomb/repair_RecA"/>
</dbReference>
<dbReference type="InterPro" id="IPR020584">
    <property type="entry name" value="DNA_recomb/repair_RecA_CS"/>
</dbReference>
<dbReference type="InterPro" id="IPR027417">
    <property type="entry name" value="P-loop_NTPase"/>
</dbReference>
<dbReference type="InterPro" id="IPR049261">
    <property type="entry name" value="RecA-like_C"/>
</dbReference>
<dbReference type="InterPro" id="IPR049428">
    <property type="entry name" value="RecA-like_N"/>
</dbReference>
<dbReference type="InterPro" id="IPR020588">
    <property type="entry name" value="RecA_ATP-bd"/>
</dbReference>
<dbReference type="InterPro" id="IPR023400">
    <property type="entry name" value="RecA_C_sf"/>
</dbReference>
<dbReference type="InterPro" id="IPR020587">
    <property type="entry name" value="RecA_monomer-monomer_interface"/>
</dbReference>
<dbReference type="NCBIfam" id="TIGR02012">
    <property type="entry name" value="tigrfam_recA"/>
    <property type="match status" value="1"/>
</dbReference>
<dbReference type="PANTHER" id="PTHR45900:SF1">
    <property type="entry name" value="MITOCHONDRIAL DNA REPAIR PROTEIN RECA HOMOLOG-RELATED"/>
    <property type="match status" value="1"/>
</dbReference>
<dbReference type="PANTHER" id="PTHR45900">
    <property type="entry name" value="RECA"/>
    <property type="match status" value="1"/>
</dbReference>
<dbReference type="Pfam" id="PF00154">
    <property type="entry name" value="RecA"/>
    <property type="match status" value="1"/>
</dbReference>
<dbReference type="Pfam" id="PF21096">
    <property type="entry name" value="RecA_C"/>
    <property type="match status" value="1"/>
</dbReference>
<dbReference type="PRINTS" id="PR00142">
    <property type="entry name" value="RECA"/>
</dbReference>
<dbReference type="SMART" id="SM00382">
    <property type="entry name" value="AAA"/>
    <property type="match status" value="1"/>
</dbReference>
<dbReference type="SUPFAM" id="SSF52540">
    <property type="entry name" value="P-loop containing nucleoside triphosphate hydrolases"/>
    <property type="match status" value="1"/>
</dbReference>
<dbReference type="SUPFAM" id="SSF54752">
    <property type="entry name" value="RecA protein, C-terminal domain"/>
    <property type="match status" value="1"/>
</dbReference>
<dbReference type="PROSITE" id="PS00321">
    <property type="entry name" value="RECA_1"/>
    <property type="match status" value="1"/>
</dbReference>
<dbReference type="PROSITE" id="PS50162">
    <property type="entry name" value="RECA_2"/>
    <property type="match status" value="1"/>
</dbReference>
<dbReference type="PROSITE" id="PS50163">
    <property type="entry name" value="RECA_3"/>
    <property type="match status" value="1"/>
</dbReference>
<comment type="function">
    <text evidence="1">Can catalyze the hydrolysis of ATP in the presence of single-stranded DNA, the ATP-dependent uptake of single-stranded DNA by duplex DNA, and the ATP-dependent hybridization of homologous single-stranded DNAs. It interacts with LexA causing its activation and leading to its autocatalytic cleavage.</text>
</comment>
<comment type="subcellular location">
    <subcellularLocation>
        <location evidence="1">Cytoplasm</location>
    </subcellularLocation>
</comment>
<comment type="similarity">
    <text evidence="1">Belongs to the RecA family.</text>
</comment>
<evidence type="ECO:0000255" key="1">
    <source>
        <dbReference type="HAMAP-Rule" id="MF_00268"/>
    </source>
</evidence>
<evidence type="ECO:0000256" key="2">
    <source>
        <dbReference type="SAM" id="MobiDB-lite"/>
    </source>
</evidence>
<sequence>MNDRQAALDQALKQIEKQFGKGSIMKLGEHSDQNISTISSGSLALDIALGVGGYPRGRIIEVYGPESSGKTTVALHAIAEVQAQGGTAAFIDAEHALDPAYAKNLGVNIDELLLSQPDTGEQALEIAEALVRSGAVDMLVIDSVAALVPRAEIEGEMGDAHVGLQARLMSQALRKLSGAINKSKTIAIFINQIREKVGVMFGNPEITPGGRALKFYSTVRLEVRRAEQLKQGTDVMGNKTKIKVVKNKVAPPFRIAEVDIMYGEGISREGELVDMAAEVDVINKSGSWYSYKEERIGQGRENAKQYLKEHTDIRDEISQRVREEYEIDGANKEPLEETEETLSLLDDE</sequence>
<feature type="chain" id="PRO_1000047941" description="Protein RecA">
    <location>
        <begin position="1"/>
        <end position="348"/>
    </location>
</feature>
<feature type="region of interest" description="Disordered" evidence="2">
    <location>
        <begin position="325"/>
        <end position="348"/>
    </location>
</feature>
<feature type="compositionally biased region" description="Basic and acidic residues" evidence="2">
    <location>
        <begin position="325"/>
        <end position="335"/>
    </location>
</feature>
<feature type="compositionally biased region" description="Acidic residues" evidence="2">
    <location>
        <begin position="336"/>
        <end position="348"/>
    </location>
</feature>
<feature type="binding site" evidence="1">
    <location>
        <begin position="64"/>
        <end position="71"/>
    </location>
    <ligand>
        <name>ATP</name>
        <dbReference type="ChEBI" id="CHEBI:30616"/>
    </ligand>
</feature>
<name>RECA_LISW6</name>
<gene>
    <name evidence="1" type="primary">recA</name>
    <name type="ordered locus">lwe1414</name>
</gene>
<protein>
    <recommendedName>
        <fullName evidence="1">Protein RecA</fullName>
    </recommendedName>
    <alternativeName>
        <fullName evidence="1">Recombinase A</fullName>
    </alternativeName>
</protein>
<proteinExistence type="inferred from homology"/>
<keyword id="KW-0067">ATP-binding</keyword>
<keyword id="KW-0963">Cytoplasm</keyword>
<keyword id="KW-0227">DNA damage</keyword>
<keyword id="KW-0233">DNA recombination</keyword>
<keyword id="KW-0234">DNA repair</keyword>
<keyword id="KW-0238">DNA-binding</keyword>
<keyword id="KW-0547">Nucleotide-binding</keyword>
<keyword id="KW-0742">SOS response</keyword>
<organism>
    <name type="scientific">Listeria welshimeri serovar 6b (strain ATCC 35897 / DSM 20650 / CCUG 15529 / CIP 8149 / NCTC 11857 / SLCC 5334 / V8)</name>
    <dbReference type="NCBI Taxonomy" id="386043"/>
    <lineage>
        <taxon>Bacteria</taxon>
        <taxon>Bacillati</taxon>
        <taxon>Bacillota</taxon>
        <taxon>Bacilli</taxon>
        <taxon>Bacillales</taxon>
        <taxon>Listeriaceae</taxon>
        <taxon>Listeria</taxon>
    </lineage>
</organism>
<reference key="1">
    <citation type="journal article" date="2006" name="J. Bacteriol.">
        <title>Whole-genome sequence of Listeria welshimeri reveals common steps in genome reduction with Listeria innocua as compared to Listeria monocytogenes.</title>
        <authorList>
            <person name="Hain T."/>
            <person name="Steinweg C."/>
            <person name="Kuenne C.T."/>
            <person name="Billion A."/>
            <person name="Ghai R."/>
            <person name="Chatterjee S.S."/>
            <person name="Domann E."/>
            <person name="Kaerst U."/>
            <person name="Goesmann A."/>
            <person name="Bekel T."/>
            <person name="Bartels D."/>
            <person name="Kaiser O."/>
            <person name="Meyer F."/>
            <person name="Puehler A."/>
            <person name="Weisshaar B."/>
            <person name="Wehland J."/>
            <person name="Liang C."/>
            <person name="Dandekar T."/>
            <person name="Lampidis R."/>
            <person name="Kreft J."/>
            <person name="Goebel W."/>
            <person name="Chakraborty T."/>
        </authorList>
    </citation>
    <scope>NUCLEOTIDE SEQUENCE [LARGE SCALE GENOMIC DNA]</scope>
    <source>
        <strain>ATCC 35897 / DSM 20650 / CCUG 15529 / CIP 8149 / NCTC 11857 / SLCC 5334 / V8</strain>
    </source>
</reference>
<accession>A0AIK0</accession>